<proteinExistence type="evidence at protein level"/>
<protein>
    <recommendedName>
        <fullName>Opsin, longwave 563 nm</fullName>
    </recommendedName>
</protein>
<feature type="chain" id="PRO_0000197804" description="Opsin, longwave 563 nm">
    <location>
        <begin position="1" status="less than"/>
        <end position="350" status="greater than"/>
    </location>
</feature>
<feature type="topological domain" description="Extracellular">
    <location>
        <begin position="1" status="less than"/>
        <end position="45"/>
    </location>
</feature>
<feature type="transmembrane region" description="Helical; Name=1" evidence="2">
    <location>
        <begin position="46"/>
        <end position="70"/>
    </location>
</feature>
<feature type="topological domain" description="Cytoplasmic">
    <location>
        <begin position="71"/>
        <end position="82"/>
    </location>
</feature>
<feature type="transmembrane region" description="Helical; Name=2" evidence="2">
    <location>
        <begin position="83"/>
        <end position="108"/>
    </location>
</feature>
<feature type="topological domain" description="Extracellular">
    <location>
        <begin position="109"/>
        <end position="122"/>
    </location>
</feature>
<feature type="transmembrane region" description="Helical; Name=3" evidence="2">
    <location>
        <begin position="123"/>
        <end position="142"/>
    </location>
</feature>
<feature type="topological domain" description="Cytoplasmic">
    <location>
        <begin position="143"/>
        <end position="161"/>
    </location>
</feature>
<feature type="transmembrane region" description="Helical; Name=4" evidence="2">
    <location>
        <begin position="162"/>
        <end position="185"/>
    </location>
</feature>
<feature type="topological domain" description="Extracellular">
    <location>
        <begin position="186"/>
        <end position="211"/>
    </location>
</feature>
<feature type="transmembrane region" description="Helical; Name=5" evidence="2">
    <location>
        <begin position="212"/>
        <end position="239"/>
    </location>
</feature>
<feature type="topological domain" description="Cytoplasmic">
    <location>
        <begin position="240"/>
        <end position="261"/>
    </location>
</feature>
<feature type="transmembrane region" description="Helical; Name=6" evidence="2">
    <location>
        <begin position="262"/>
        <end position="285"/>
    </location>
</feature>
<feature type="topological domain" description="Extracellular">
    <location>
        <begin position="286"/>
        <end position="293"/>
    </location>
</feature>
<feature type="transmembrane region" description="Helical; Name=7" evidence="2">
    <location>
        <begin position="294"/>
        <end position="318"/>
    </location>
</feature>
<feature type="topological domain" description="Cytoplasmic">
    <location>
        <begin position="319"/>
        <end position="350" status="greater than"/>
    </location>
</feature>
<feature type="modified residue" description="N6-(retinylidene)lysine" evidence="1">
    <location>
        <position position="305"/>
    </location>
</feature>
<feature type="glycosylation site" description="N-linked (GlcNAc...) asparagine" evidence="4">
    <location>
        <position position="27"/>
    </location>
</feature>
<feature type="disulfide bond" evidence="3">
    <location>
        <begin position="119"/>
        <end position="196"/>
    </location>
</feature>
<feature type="non-terminal residue">
    <location>
        <position position="1"/>
    </location>
</feature>
<feature type="non-terminal residue">
    <location>
        <position position="350"/>
    </location>
</feature>
<organism>
    <name type="scientific">Callithrix jacchus</name>
    <name type="common">White-tufted-ear marmoset</name>
    <dbReference type="NCBI Taxonomy" id="9483"/>
    <lineage>
        <taxon>Eukaryota</taxon>
        <taxon>Metazoa</taxon>
        <taxon>Chordata</taxon>
        <taxon>Craniata</taxon>
        <taxon>Vertebrata</taxon>
        <taxon>Euteleostomi</taxon>
        <taxon>Mammalia</taxon>
        <taxon>Eutheria</taxon>
        <taxon>Euarchontoglires</taxon>
        <taxon>Primates</taxon>
        <taxon>Haplorrhini</taxon>
        <taxon>Platyrrhini</taxon>
        <taxon>Cebidae</taxon>
        <taxon>Callitrichinae</taxon>
        <taxon>Callithrix</taxon>
        <taxon>Callithrix</taxon>
    </lineage>
</organism>
<keyword id="KW-0157">Chromophore</keyword>
<keyword id="KW-1015">Disulfide bond</keyword>
<keyword id="KW-0297">G-protein coupled receptor</keyword>
<keyword id="KW-0325">Glycoprotein</keyword>
<keyword id="KW-0472">Membrane</keyword>
<keyword id="KW-0597">Phosphoprotein</keyword>
<keyword id="KW-0600">Photoreceptor protein</keyword>
<keyword id="KW-0675">Receptor</keyword>
<keyword id="KW-1185">Reference proteome</keyword>
<keyword id="KW-0681">Retinal protein</keyword>
<keyword id="KW-0716">Sensory transduction</keyword>
<keyword id="KW-0807">Transducer</keyword>
<keyword id="KW-0812">Transmembrane</keyword>
<keyword id="KW-1133">Transmembrane helix</keyword>
<keyword id="KW-0844">Vision</keyword>
<sequence>HRLAGRHPQDNYEDSTQSSIFTYTNSNSTRGPFEGPNYHIAPRWVYHLTSVWMLFVVVASVFTNGLVLAATMKFKKLRHPLNWILVNLAIADLAETVIASTISVVNQVHGYFVLGHPMCVLEGYTVSLCGITGLWSLAIISWERWLVVCKPFGNVRFDAKLAIVGVAFSWIWSAVWTAPPIFGWSRYWPHGLKTSCGPDVFSGSSYPGVQSYMIVLMITCCFLPLGIIVLCYLQVWLAIRAVAKQQKESESTQKAEKEVTRMVVVMIVAYCVCWGPYTFFACFAAANPGYAFHPLMAALPAYFAKSATIYNPIIYVFMNRQFRNCILQLFGKKVDDGSELSSASKTEVSS</sequence>
<evidence type="ECO:0000250" key="1"/>
<evidence type="ECO:0000255" key="2"/>
<evidence type="ECO:0000255" key="3">
    <source>
        <dbReference type="PROSITE-ProRule" id="PRU00521"/>
    </source>
</evidence>
<evidence type="ECO:0000305" key="4"/>
<name>OPSL_CALJA</name>
<reference key="1">
    <citation type="journal article" date="1993" name="Vision Res.">
        <title>Structure and evolution of the polymorphic photopigment gene of the marmoset.</title>
        <authorList>
            <person name="Hunt D.M."/>
            <person name="Williams A.J."/>
            <person name="Bowmaker J.K."/>
            <person name="Mollon J.D."/>
        </authorList>
    </citation>
    <scope>NUCLEOTIDE SEQUENCE [MRNA]</scope>
    <source>
        <tissue>Liver</tissue>
    </source>
</reference>
<reference key="2">
    <citation type="journal article" date="1992" name="EMBO J.">
        <title>The polymorphic photopigments of the marmoset: spectral tuning and genetic basis.</title>
        <authorList>
            <person name="Williams A.J."/>
            <person name="Hunt D.M."/>
            <person name="Bowmaker J.K."/>
            <person name="Mollon J.D."/>
        </authorList>
    </citation>
    <scope>CHARACTERIZATION</scope>
</reference>
<comment type="function">
    <text>Visual pigments are the light-absorbing molecules that mediate vision. They consist of an apoprotein, opsin, covalently linked to cis-retinal.</text>
</comment>
<comment type="biophysicochemical properties">
    <absorption>
        <max>563 nm</max>
    </absorption>
</comment>
<comment type="subcellular location">
    <subcellularLocation>
        <location>Membrane</location>
        <topology>Multi-pass membrane protein</topology>
    </subcellularLocation>
</comment>
<comment type="tissue specificity">
    <text>The color pigments are found in the cone photoreceptor cells.</text>
</comment>
<comment type="PTM">
    <text>Phosphorylated on some or all of the serine and threonine residues present in the C-terminal region.</text>
</comment>
<comment type="similarity">
    <text evidence="3">Belongs to the G-protein coupled receptor 1 family. Opsin subfamily.</text>
</comment>
<accession>P34989</accession>
<dbReference type="EMBL" id="Z22218">
    <property type="protein sequence ID" value="CAA80221.1"/>
    <property type="molecule type" value="mRNA"/>
</dbReference>
<dbReference type="PIR" id="S43497">
    <property type="entry name" value="S43497"/>
</dbReference>
<dbReference type="SMR" id="P34989"/>
<dbReference type="FunCoup" id="P34989">
    <property type="interactions" value="287"/>
</dbReference>
<dbReference type="STRING" id="9483.ENSCJAP00000070261"/>
<dbReference type="eggNOG" id="KOG3656">
    <property type="taxonomic scope" value="Eukaryota"/>
</dbReference>
<dbReference type="InParanoid" id="P34989"/>
<dbReference type="Proteomes" id="UP000008225">
    <property type="component" value="Unplaced"/>
</dbReference>
<dbReference type="GO" id="GO:0097381">
    <property type="term" value="C:photoreceptor disc membrane"/>
    <property type="evidence" value="ECO:0007669"/>
    <property type="project" value="UniProtKB-ARBA"/>
</dbReference>
<dbReference type="GO" id="GO:0004930">
    <property type="term" value="F:G protein-coupled receptor activity"/>
    <property type="evidence" value="ECO:0007669"/>
    <property type="project" value="UniProtKB-KW"/>
</dbReference>
<dbReference type="GO" id="GO:0009881">
    <property type="term" value="F:photoreceptor activity"/>
    <property type="evidence" value="ECO:0007669"/>
    <property type="project" value="UniProtKB-KW"/>
</dbReference>
<dbReference type="GO" id="GO:0007602">
    <property type="term" value="P:phototransduction"/>
    <property type="evidence" value="ECO:0007669"/>
    <property type="project" value="UniProtKB-KW"/>
</dbReference>
<dbReference type="GO" id="GO:0007601">
    <property type="term" value="P:visual perception"/>
    <property type="evidence" value="ECO:0007669"/>
    <property type="project" value="UniProtKB-KW"/>
</dbReference>
<dbReference type="CDD" id="cd15081">
    <property type="entry name" value="7tmA_LWS_opsin"/>
    <property type="match status" value="1"/>
</dbReference>
<dbReference type="FunFam" id="1.20.1070.10:FF:000090">
    <property type="entry name" value="Long-wave-sensitive opsin 1"/>
    <property type="match status" value="1"/>
</dbReference>
<dbReference type="Gene3D" id="1.20.1070.10">
    <property type="entry name" value="Rhodopsin 7-helix transmembrane proteins"/>
    <property type="match status" value="1"/>
</dbReference>
<dbReference type="InterPro" id="IPR050125">
    <property type="entry name" value="GPCR_opsins"/>
</dbReference>
<dbReference type="InterPro" id="IPR000276">
    <property type="entry name" value="GPCR_Rhodpsn"/>
</dbReference>
<dbReference type="InterPro" id="IPR017452">
    <property type="entry name" value="GPCR_Rhodpsn_7TM"/>
</dbReference>
<dbReference type="InterPro" id="IPR001760">
    <property type="entry name" value="Opsin"/>
</dbReference>
<dbReference type="InterPro" id="IPR000378">
    <property type="entry name" value="Opsin_red/grn"/>
</dbReference>
<dbReference type="InterPro" id="IPR027430">
    <property type="entry name" value="Retinal_BS"/>
</dbReference>
<dbReference type="PANTHER" id="PTHR24240">
    <property type="entry name" value="OPSIN"/>
    <property type="match status" value="1"/>
</dbReference>
<dbReference type="Pfam" id="PF00001">
    <property type="entry name" value="7tm_1"/>
    <property type="match status" value="1"/>
</dbReference>
<dbReference type="PRINTS" id="PR00237">
    <property type="entry name" value="GPCRRHODOPSN"/>
</dbReference>
<dbReference type="PRINTS" id="PR00238">
    <property type="entry name" value="OPSIN"/>
</dbReference>
<dbReference type="PRINTS" id="PR00575">
    <property type="entry name" value="OPSINREDGRN"/>
</dbReference>
<dbReference type="SUPFAM" id="SSF81321">
    <property type="entry name" value="Family A G protein-coupled receptor-like"/>
    <property type="match status" value="1"/>
</dbReference>
<dbReference type="PROSITE" id="PS00237">
    <property type="entry name" value="G_PROTEIN_RECEP_F1_1"/>
    <property type="match status" value="1"/>
</dbReference>
<dbReference type="PROSITE" id="PS50262">
    <property type="entry name" value="G_PROTEIN_RECEP_F1_2"/>
    <property type="match status" value="1"/>
</dbReference>
<dbReference type="PROSITE" id="PS00238">
    <property type="entry name" value="OPSIN"/>
    <property type="match status" value="1"/>
</dbReference>